<proteinExistence type="inferred from homology"/>
<accession>A9MPH9</accession>
<sequence>MAAQRPLTIALVAGETSGDILGAGLIRALKARVPNARFVGVAGPRMQAEGCEAWYEMEELAVMGIVEVLGRLRRLLHIRADLTRRFTALKPDVFVGIDAPDFNITLEGNLKKQGIKTIHYVSPSVWAWRQKRVFKIGRSTHMVLAFLPFEKAFYDKFNVPCRFIGHTMADAMPLDPNKNTARDVLGIPHDAHCLALLPGSRGAEVEMLSADFLKTAQLLRQHYPDLEVVVPLVNAKRREQFEKIKAEIAPDLAVHLLDGMGREAMVASDAALLASGTAALECMLAKCPMVVGYRMKPFTFWLAKRLVKTEYVSLPNLLAGRELVKELLQEECEPQKLAEALLPLLANGKTSHVMHDTFRELHQQIRCNADEQAADAVLELAQ</sequence>
<reference key="1">
    <citation type="submission" date="2007-11" db="EMBL/GenBank/DDBJ databases">
        <authorList>
            <consortium name="The Salmonella enterica serovar Arizonae Genome Sequencing Project"/>
            <person name="McClelland M."/>
            <person name="Sanderson E.K."/>
            <person name="Porwollik S."/>
            <person name="Spieth J."/>
            <person name="Clifton W.S."/>
            <person name="Fulton R."/>
            <person name="Chunyan W."/>
            <person name="Wollam A."/>
            <person name="Shah N."/>
            <person name="Pepin K."/>
            <person name="Bhonagiri V."/>
            <person name="Nash W."/>
            <person name="Johnson M."/>
            <person name="Thiruvilangam P."/>
            <person name="Wilson R."/>
        </authorList>
    </citation>
    <scope>NUCLEOTIDE SEQUENCE [LARGE SCALE GENOMIC DNA]</scope>
    <source>
        <strain>ATCC BAA-731 / CDC346-86 / RSK2980</strain>
    </source>
</reference>
<keyword id="KW-0328">Glycosyltransferase</keyword>
<keyword id="KW-0441">Lipid A biosynthesis</keyword>
<keyword id="KW-0444">Lipid biosynthesis</keyword>
<keyword id="KW-0443">Lipid metabolism</keyword>
<keyword id="KW-1185">Reference proteome</keyword>
<keyword id="KW-0808">Transferase</keyword>
<evidence type="ECO:0000255" key="1">
    <source>
        <dbReference type="HAMAP-Rule" id="MF_00392"/>
    </source>
</evidence>
<organism>
    <name type="scientific">Salmonella arizonae (strain ATCC BAA-731 / CDC346-86 / RSK2980)</name>
    <dbReference type="NCBI Taxonomy" id="41514"/>
    <lineage>
        <taxon>Bacteria</taxon>
        <taxon>Pseudomonadati</taxon>
        <taxon>Pseudomonadota</taxon>
        <taxon>Gammaproteobacteria</taxon>
        <taxon>Enterobacterales</taxon>
        <taxon>Enterobacteriaceae</taxon>
        <taxon>Salmonella</taxon>
    </lineage>
</organism>
<feature type="chain" id="PRO_1000080282" description="Lipid-A-disaccharide synthase">
    <location>
        <begin position="1"/>
        <end position="382"/>
    </location>
</feature>
<name>LPXB_SALAR</name>
<gene>
    <name evidence="1" type="primary">lpxB</name>
    <name type="ordered locus">SARI_02773</name>
</gene>
<protein>
    <recommendedName>
        <fullName evidence="1">Lipid-A-disaccharide synthase</fullName>
        <ecNumber evidence="1">2.4.1.182</ecNumber>
    </recommendedName>
</protein>
<comment type="function">
    <text evidence="1">Condensation of UDP-2,3-diacylglucosamine and 2,3-diacylglucosamine-1-phosphate to form lipid A disaccharide, a precursor of lipid A, a phosphorylated glycolipid that anchors the lipopolysaccharide to the outer membrane of the cell.</text>
</comment>
<comment type="catalytic activity">
    <reaction evidence="1">
        <text>2-N,3-O-bis[(3R)-3-hydroxytetradecanoyl]-alpha-D-glucosaminyl 1-phosphate + UDP-2-N,3-O-bis[(3R)-3-hydroxytetradecanoyl]-alpha-D-glucosamine = lipid A disaccharide (E. coli) + UDP + H(+)</text>
        <dbReference type="Rhea" id="RHEA:22668"/>
        <dbReference type="ChEBI" id="CHEBI:15378"/>
        <dbReference type="ChEBI" id="CHEBI:57957"/>
        <dbReference type="ChEBI" id="CHEBI:58223"/>
        <dbReference type="ChEBI" id="CHEBI:58466"/>
        <dbReference type="ChEBI" id="CHEBI:78847"/>
    </reaction>
</comment>
<comment type="catalytic activity">
    <reaction evidence="1">
        <text>a lipid X + a UDP-2-N,3-O-bis[(3R)-3-hydroxyacyl]-alpha-D-glucosamine = a lipid A disaccharide + UDP + H(+)</text>
        <dbReference type="Rhea" id="RHEA:67828"/>
        <dbReference type="ChEBI" id="CHEBI:15378"/>
        <dbReference type="ChEBI" id="CHEBI:58223"/>
        <dbReference type="ChEBI" id="CHEBI:137748"/>
        <dbReference type="ChEBI" id="CHEBI:176338"/>
        <dbReference type="ChEBI" id="CHEBI:176343"/>
        <dbReference type="EC" id="2.4.1.182"/>
    </reaction>
</comment>
<comment type="pathway">
    <text evidence="1">Glycolipid biosynthesis; lipid IV(A) biosynthesis; lipid IV(A) from (3R)-3-hydroxytetradecanoyl-[acyl-carrier-protein] and UDP-N-acetyl-alpha-D-glucosamine: step 5/6.</text>
</comment>
<comment type="similarity">
    <text evidence="1">Belongs to the LpxB family.</text>
</comment>
<dbReference type="EC" id="2.4.1.182" evidence="1"/>
<dbReference type="EMBL" id="CP000880">
    <property type="protein sequence ID" value="ABX22622.1"/>
    <property type="molecule type" value="Genomic_DNA"/>
</dbReference>
<dbReference type="SMR" id="A9MPH9"/>
<dbReference type="STRING" id="41514.SARI_02773"/>
<dbReference type="CAZy" id="GT19">
    <property type="family name" value="Glycosyltransferase Family 19"/>
</dbReference>
<dbReference type="KEGG" id="ses:SARI_02773"/>
<dbReference type="HOGENOM" id="CLU_036577_3_0_6"/>
<dbReference type="UniPathway" id="UPA00359">
    <property type="reaction ID" value="UER00481"/>
</dbReference>
<dbReference type="Proteomes" id="UP000002084">
    <property type="component" value="Chromosome"/>
</dbReference>
<dbReference type="GO" id="GO:0016020">
    <property type="term" value="C:membrane"/>
    <property type="evidence" value="ECO:0007669"/>
    <property type="project" value="GOC"/>
</dbReference>
<dbReference type="GO" id="GO:0008915">
    <property type="term" value="F:lipid-A-disaccharide synthase activity"/>
    <property type="evidence" value="ECO:0007669"/>
    <property type="project" value="UniProtKB-UniRule"/>
</dbReference>
<dbReference type="GO" id="GO:0005543">
    <property type="term" value="F:phospholipid binding"/>
    <property type="evidence" value="ECO:0007669"/>
    <property type="project" value="TreeGrafter"/>
</dbReference>
<dbReference type="GO" id="GO:0009245">
    <property type="term" value="P:lipid A biosynthetic process"/>
    <property type="evidence" value="ECO:0007669"/>
    <property type="project" value="UniProtKB-UniRule"/>
</dbReference>
<dbReference type="CDD" id="cd01635">
    <property type="entry name" value="Glycosyltransferase_GTB-type"/>
    <property type="match status" value="1"/>
</dbReference>
<dbReference type="HAMAP" id="MF_00392">
    <property type="entry name" value="LpxB"/>
    <property type="match status" value="1"/>
</dbReference>
<dbReference type="InterPro" id="IPR003835">
    <property type="entry name" value="Glyco_trans_19"/>
</dbReference>
<dbReference type="NCBIfam" id="TIGR00215">
    <property type="entry name" value="lpxB"/>
    <property type="match status" value="1"/>
</dbReference>
<dbReference type="PANTHER" id="PTHR30372">
    <property type="entry name" value="LIPID-A-DISACCHARIDE SYNTHASE"/>
    <property type="match status" value="1"/>
</dbReference>
<dbReference type="PANTHER" id="PTHR30372:SF4">
    <property type="entry name" value="LIPID-A-DISACCHARIDE SYNTHASE, MITOCHONDRIAL-RELATED"/>
    <property type="match status" value="1"/>
</dbReference>
<dbReference type="Pfam" id="PF02684">
    <property type="entry name" value="LpxB"/>
    <property type="match status" value="1"/>
</dbReference>
<dbReference type="SUPFAM" id="SSF53756">
    <property type="entry name" value="UDP-Glycosyltransferase/glycogen phosphorylase"/>
    <property type="match status" value="1"/>
</dbReference>